<reference key="1">
    <citation type="journal article" date="1997" name="Nature">
        <title>The complete genome sequence of the hyperthermophilic, sulphate-reducing archaeon Archaeoglobus fulgidus.</title>
        <authorList>
            <person name="Klenk H.-P."/>
            <person name="Clayton R.A."/>
            <person name="Tomb J.-F."/>
            <person name="White O."/>
            <person name="Nelson K.E."/>
            <person name="Ketchum K.A."/>
            <person name="Dodson R.J."/>
            <person name="Gwinn M.L."/>
            <person name="Hickey E.K."/>
            <person name="Peterson J.D."/>
            <person name="Richardson D.L."/>
            <person name="Kerlavage A.R."/>
            <person name="Graham D.E."/>
            <person name="Kyrpides N.C."/>
            <person name="Fleischmann R.D."/>
            <person name="Quackenbush J."/>
            <person name="Lee N.H."/>
            <person name="Sutton G.G."/>
            <person name="Gill S.R."/>
            <person name="Kirkness E.F."/>
            <person name="Dougherty B.A."/>
            <person name="McKenney K."/>
            <person name="Adams M.D."/>
            <person name="Loftus B.J."/>
            <person name="Peterson S.N."/>
            <person name="Reich C.I."/>
            <person name="McNeil L.K."/>
            <person name="Badger J.H."/>
            <person name="Glodek A."/>
            <person name="Zhou L."/>
            <person name="Overbeek R."/>
            <person name="Gocayne J.D."/>
            <person name="Weidman J.F."/>
            <person name="McDonald L.A."/>
            <person name="Utterback T.R."/>
            <person name="Cotton M.D."/>
            <person name="Spriggs T."/>
            <person name="Artiach P."/>
            <person name="Kaine B.P."/>
            <person name="Sykes S.M."/>
            <person name="Sadow P.W."/>
            <person name="D'Andrea K.P."/>
            <person name="Bowman C."/>
            <person name="Fujii C."/>
            <person name="Garland S.A."/>
            <person name="Mason T.M."/>
            <person name="Olsen G.J."/>
            <person name="Fraser C.M."/>
            <person name="Smith H.O."/>
            <person name="Woese C.R."/>
            <person name="Venter J.C."/>
        </authorList>
    </citation>
    <scope>NUCLEOTIDE SEQUENCE [LARGE SCALE GENOMIC DNA]</scope>
    <source>
        <strain>ATCC 49558 / DSM 4304 / JCM 9628 / NBRC 100126 / VC-16</strain>
    </source>
</reference>
<proteinExistence type="inferred from homology"/>
<gene>
    <name evidence="1" type="primary">sucC1</name>
    <name type="ordered locus">AF_1540</name>
</gene>
<keyword id="KW-0067">ATP-binding</keyword>
<keyword id="KW-0436">Ligase</keyword>
<keyword id="KW-0460">Magnesium</keyword>
<keyword id="KW-0479">Metal-binding</keyword>
<keyword id="KW-0547">Nucleotide-binding</keyword>
<keyword id="KW-1185">Reference proteome</keyword>
<keyword id="KW-0816">Tricarboxylic acid cycle</keyword>
<accession>O28732</accession>
<organism>
    <name type="scientific">Archaeoglobus fulgidus (strain ATCC 49558 / DSM 4304 / JCM 9628 / NBRC 100126 / VC-16)</name>
    <dbReference type="NCBI Taxonomy" id="224325"/>
    <lineage>
        <taxon>Archaea</taxon>
        <taxon>Methanobacteriati</taxon>
        <taxon>Methanobacteriota</taxon>
        <taxon>Archaeoglobi</taxon>
        <taxon>Archaeoglobales</taxon>
        <taxon>Archaeoglobaceae</taxon>
        <taxon>Archaeoglobus</taxon>
    </lineage>
</organism>
<evidence type="ECO:0000255" key="1">
    <source>
        <dbReference type="HAMAP-Rule" id="MF_00558"/>
    </source>
</evidence>
<evidence type="ECO:0000305" key="2"/>
<name>SUCC1_ARCFU</name>
<feature type="chain" id="PRO_0000102882" description="Succinate--CoA ligase [ADP-forming] subunit beta 1">
    <location>
        <begin position="1"/>
        <end position="382"/>
    </location>
</feature>
<feature type="domain" description="ATP-grasp" evidence="1">
    <location>
        <begin position="9"/>
        <end position="235"/>
    </location>
</feature>
<feature type="binding site" evidence="1">
    <location>
        <position position="45"/>
    </location>
    <ligand>
        <name>ATP</name>
        <dbReference type="ChEBI" id="CHEBI:30616"/>
    </ligand>
</feature>
<feature type="binding site" evidence="1">
    <location>
        <begin position="52"/>
        <end position="54"/>
    </location>
    <ligand>
        <name>ATP</name>
        <dbReference type="ChEBI" id="CHEBI:30616"/>
    </ligand>
</feature>
<feature type="binding site" evidence="1">
    <location>
        <position position="91"/>
    </location>
    <ligand>
        <name>ATP</name>
        <dbReference type="ChEBI" id="CHEBI:30616"/>
    </ligand>
</feature>
<feature type="binding site" evidence="1">
    <location>
        <position position="94"/>
    </location>
    <ligand>
        <name>ATP</name>
        <dbReference type="ChEBI" id="CHEBI:30616"/>
    </ligand>
</feature>
<feature type="binding site" evidence="1">
    <location>
        <position position="99"/>
    </location>
    <ligand>
        <name>ATP</name>
        <dbReference type="ChEBI" id="CHEBI:30616"/>
    </ligand>
</feature>
<feature type="binding site" evidence="1">
    <location>
        <position position="191"/>
    </location>
    <ligand>
        <name>Mg(2+)</name>
        <dbReference type="ChEBI" id="CHEBI:18420"/>
    </ligand>
</feature>
<feature type="binding site" evidence="1">
    <location>
        <position position="204"/>
    </location>
    <ligand>
        <name>Mg(2+)</name>
        <dbReference type="ChEBI" id="CHEBI:18420"/>
    </ligand>
</feature>
<feature type="binding site" evidence="1">
    <location>
        <position position="255"/>
    </location>
    <ligand>
        <name>substrate</name>
        <note>ligand shared with subunit alpha</note>
    </ligand>
</feature>
<comment type="function">
    <text evidence="1">Succinyl-CoA synthetase functions in the citric acid cycle (TCA), coupling the hydrolysis of succinyl-CoA to the synthesis of either ATP or GTP and thus represents the only step of substrate-level phosphorylation in the TCA. The beta subunit provides nucleotide specificity of the enzyme and binds the substrate succinate, while the binding sites for coenzyme A and phosphate are found in the alpha subunit.</text>
</comment>
<comment type="catalytic activity">
    <reaction evidence="1">
        <text>succinate + ATP + CoA = succinyl-CoA + ADP + phosphate</text>
        <dbReference type="Rhea" id="RHEA:17661"/>
        <dbReference type="ChEBI" id="CHEBI:30031"/>
        <dbReference type="ChEBI" id="CHEBI:30616"/>
        <dbReference type="ChEBI" id="CHEBI:43474"/>
        <dbReference type="ChEBI" id="CHEBI:57287"/>
        <dbReference type="ChEBI" id="CHEBI:57292"/>
        <dbReference type="ChEBI" id="CHEBI:456216"/>
        <dbReference type="EC" id="6.2.1.5"/>
    </reaction>
    <physiologicalReaction direction="right-to-left" evidence="1">
        <dbReference type="Rhea" id="RHEA:17663"/>
    </physiologicalReaction>
</comment>
<comment type="catalytic activity">
    <reaction evidence="1">
        <text>GTP + succinate + CoA = succinyl-CoA + GDP + phosphate</text>
        <dbReference type="Rhea" id="RHEA:22120"/>
        <dbReference type="ChEBI" id="CHEBI:30031"/>
        <dbReference type="ChEBI" id="CHEBI:37565"/>
        <dbReference type="ChEBI" id="CHEBI:43474"/>
        <dbReference type="ChEBI" id="CHEBI:57287"/>
        <dbReference type="ChEBI" id="CHEBI:57292"/>
        <dbReference type="ChEBI" id="CHEBI:58189"/>
    </reaction>
    <physiologicalReaction direction="right-to-left" evidence="1">
        <dbReference type="Rhea" id="RHEA:22122"/>
    </physiologicalReaction>
</comment>
<comment type="cofactor">
    <cofactor evidence="1">
        <name>Mg(2+)</name>
        <dbReference type="ChEBI" id="CHEBI:18420"/>
    </cofactor>
    <text evidence="1">Binds 1 Mg(2+) ion per subunit.</text>
</comment>
<comment type="pathway">
    <text evidence="1">Carbohydrate metabolism; tricarboxylic acid cycle; succinate from succinyl-CoA (ligase route): step 1/1.</text>
</comment>
<comment type="subunit">
    <text evidence="1">Heterotetramer of two alpha and two beta subunits.</text>
</comment>
<comment type="similarity">
    <text evidence="1">Belongs to the succinate/malate CoA ligase beta subunit family.</text>
</comment>
<comment type="sequence caution" evidence="2">
    <conflict type="erroneous initiation">
        <sequence resource="EMBL-CDS" id="AAB89706"/>
    </conflict>
</comment>
<sequence length="382" mass="42205">MRLHEHQAKQIFAKHGIRVPRGEVATSPEEAEKIAEKLGGRVVVKAQILVGGRGKAGGVKKANSPEEAKEVAKKILGMTIKGHRVEKVLVEEQLNMRKEYYVGYVVDKSSRLPTVIFSRMGGMDVEEIAAKHPDAIHRIYFDPLWGLKDYEVRKALFRAGFEGEEFKQMFDIIKKLVDIAFAYEAELTEINPLAVTDEGFLAADARLNTDDNALYRHPELAELREATEEDPLEREARLKGINYVHLGGNVGVIANGAGLAMATMDIINLMGGKPANFLDTGGGLADPVKMKNCLLHVLKDPNVRVVFINIYAEITRCEKVAEGIILALDEAPRKVPLVVKLAGTNEEIGREMLERYSSEKGAEIHFVESIEEGARKAVELAG</sequence>
<protein>
    <recommendedName>
        <fullName evidence="1">Succinate--CoA ligase [ADP-forming] subunit beta 1</fullName>
        <ecNumber evidence="1">6.2.1.5</ecNumber>
    </recommendedName>
    <alternativeName>
        <fullName evidence="1">Succinyl-CoA synthetase subunit beta 1</fullName>
        <shortName evidence="1">SCS-beta 1</shortName>
    </alternativeName>
</protein>
<dbReference type="EC" id="6.2.1.5" evidence="1"/>
<dbReference type="EMBL" id="AE000782">
    <property type="protein sequence ID" value="AAB89706.1"/>
    <property type="status" value="ALT_INIT"/>
    <property type="molecule type" value="Genomic_DNA"/>
</dbReference>
<dbReference type="PIR" id="C69442">
    <property type="entry name" value="C69442"/>
</dbReference>
<dbReference type="SMR" id="O28732"/>
<dbReference type="STRING" id="224325.AF_1540"/>
<dbReference type="PaxDb" id="224325-AF_1540"/>
<dbReference type="EnsemblBacteria" id="AAB89706">
    <property type="protein sequence ID" value="AAB89706"/>
    <property type="gene ID" value="AF_1540"/>
</dbReference>
<dbReference type="KEGG" id="afu:AF_1540"/>
<dbReference type="eggNOG" id="arCOG01337">
    <property type="taxonomic scope" value="Archaea"/>
</dbReference>
<dbReference type="HOGENOM" id="CLU_037430_0_2_2"/>
<dbReference type="OrthoDB" id="146449at2157"/>
<dbReference type="PhylomeDB" id="O28732"/>
<dbReference type="UniPathway" id="UPA00223">
    <property type="reaction ID" value="UER00999"/>
</dbReference>
<dbReference type="Proteomes" id="UP000002199">
    <property type="component" value="Chromosome"/>
</dbReference>
<dbReference type="GO" id="GO:0042709">
    <property type="term" value="C:succinate-CoA ligase complex"/>
    <property type="evidence" value="ECO:0007669"/>
    <property type="project" value="TreeGrafter"/>
</dbReference>
<dbReference type="GO" id="GO:0005524">
    <property type="term" value="F:ATP binding"/>
    <property type="evidence" value="ECO:0007669"/>
    <property type="project" value="UniProtKB-UniRule"/>
</dbReference>
<dbReference type="GO" id="GO:0000287">
    <property type="term" value="F:magnesium ion binding"/>
    <property type="evidence" value="ECO:0007669"/>
    <property type="project" value="UniProtKB-UniRule"/>
</dbReference>
<dbReference type="GO" id="GO:0004775">
    <property type="term" value="F:succinate-CoA ligase (ADP-forming) activity"/>
    <property type="evidence" value="ECO:0007669"/>
    <property type="project" value="UniProtKB-UniRule"/>
</dbReference>
<dbReference type="GO" id="GO:0004776">
    <property type="term" value="F:succinate-CoA ligase (GDP-forming) activity"/>
    <property type="evidence" value="ECO:0007669"/>
    <property type="project" value="RHEA"/>
</dbReference>
<dbReference type="GO" id="GO:0006104">
    <property type="term" value="P:succinyl-CoA metabolic process"/>
    <property type="evidence" value="ECO:0007669"/>
    <property type="project" value="TreeGrafter"/>
</dbReference>
<dbReference type="GO" id="GO:0006099">
    <property type="term" value="P:tricarboxylic acid cycle"/>
    <property type="evidence" value="ECO:0007669"/>
    <property type="project" value="UniProtKB-UniRule"/>
</dbReference>
<dbReference type="FunFam" id="3.30.1490.20:FF:000014">
    <property type="entry name" value="Succinate--CoA ligase [ADP-forming] subunit beta"/>
    <property type="match status" value="1"/>
</dbReference>
<dbReference type="FunFam" id="3.30.470.20:FF:000002">
    <property type="entry name" value="Succinate--CoA ligase [ADP-forming] subunit beta"/>
    <property type="match status" value="1"/>
</dbReference>
<dbReference type="Gene3D" id="3.30.1490.20">
    <property type="entry name" value="ATP-grasp fold, A domain"/>
    <property type="match status" value="1"/>
</dbReference>
<dbReference type="Gene3D" id="3.30.470.20">
    <property type="entry name" value="ATP-grasp fold, B domain"/>
    <property type="match status" value="1"/>
</dbReference>
<dbReference type="Gene3D" id="3.40.50.261">
    <property type="entry name" value="Succinyl-CoA synthetase domains"/>
    <property type="match status" value="1"/>
</dbReference>
<dbReference type="HAMAP" id="MF_00558">
    <property type="entry name" value="Succ_CoA_beta"/>
    <property type="match status" value="1"/>
</dbReference>
<dbReference type="InterPro" id="IPR011761">
    <property type="entry name" value="ATP-grasp"/>
</dbReference>
<dbReference type="InterPro" id="IPR013650">
    <property type="entry name" value="ATP-grasp_succ-CoA_synth-type"/>
</dbReference>
<dbReference type="InterPro" id="IPR013815">
    <property type="entry name" value="ATP_grasp_subdomain_1"/>
</dbReference>
<dbReference type="InterPro" id="IPR017866">
    <property type="entry name" value="Succ-CoA_synthase_bsu_CS"/>
</dbReference>
<dbReference type="InterPro" id="IPR005811">
    <property type="entry name" value="SUCC_ACL_C"/>
</dbReference>
<dbReference type="InterPro" id="IPR005809">
    <property type="entry name" value="Succ_CoA_ligase-like_bsu"/>
</dbReference>
<dbReference type="InterPro" id="IPR016102">
    <property type="entry name" value="Succinyl-CoA_synth-like"/>
</dbReference>
<dbReference type="NCBIfam" id="NF001913">
    <property type="entry name" value="PRK00696.1"/>
    <property type="match status" value="1"/>
</dbReference>
<dbReference type="NCBIfam" id="TIGR01016">
    <property type="entry name" value="sucCoAbeta"/>
    <property type="match status" value="1"/>
</dbReference>
<dbReference type="PANTHER" id="PTHR11815:SF10">
    <property type="entry name" value="SUCCINATE--COA LIGASE [GDP-FORMING] SUBUNIT BETA, MITOCHONDRIAL"/>
    <property type="match status" value="1"/>
</dbReference>
<dbReference type="PANTHER" id="PTHR11815">
    <property type="entry name" value="SUCCINYL-COA SYNTHETASE BETA CHAIN"/>
    <property type="match status" value="1"/>
</dbReference>
<dbReference type="Pfam" id="PF08442">
    <property type="entry name" value="ATP-grasp_2"/>
    <property type="match status" value="1"/>
</dbReference>
<dbReference type="Pfam" id="PF00549">
    <property type="entry name" value="Ligase_CoA"/>
    <property type="match status" value="1"/>
</dbReference>
<dbReference type="PIRSF" id="PIRSF001554">
    <property type="entry name" value="SucCS_beta"/>
    <property type="match status" value="1"/>
</dbReference>
<dbReference type="SUPFAM" id="SSF56059">
    <property type="entry name" value="Glutathione synthetase ATP-binding domain-like"/>
    <property type="match status" value="1"/>
</dbReference>
<dbReference type="SUPFAM" id="SSF52210">
    <property type="entry name" value="Succinyl-CoA synthetase domains"/>
    <property type="match status" value="1"/>
</dbReference>
<dbReference type="PROSITE" id="PS50975">
    <property type="entry name" value="ATP_GRASP"/>
    <property type="match status" value="1"/>
</dbReference>
<dbReference type="PROSITE" id="PS01217">
    <property type="entry name" value="SUCCINYL_COA_LIG_3"/>
    <property type="match status" value="1"/>
</dbReference>